<protein>
    <recommendedName>
        <fullName evidence="2">Small ribosomal subunit protein uS3</fullName>
    </recommendedName>
    <alternativeName>
        <fullName evidence="4">30S ribosomal protein S3</fullName>
    </alternativeName>
</protein>
<reference key="1">
    <citation type="journal article" date="1997" name="Mol. Microbiol.">
        <title>The role of ribosomal RNAs in macrolide resistance.</title>
        <authorList>
            <person name="Sander P."/>
            <person name="Prammananan T."/>
            <person name="Meier A."/>
            <person name="Frischkorn K."/>
            <person name="Boettger E.C."/>
        </authorList>
    </citation>
    <scope>NUCLEOTIDE SEQUENCE [GENOMIC DNA]</scope>
    <source>
        <strain>BCG</strain>
    </source>
</reference>
<reference key="2">
    <citation type="journal article" date="2003" name="Proc. Natl. Acad. Sci. U.S.A.">
        <title>The complete genome sequence of Mycobacterium bovis.</title>
        <authorList>
            <person name="Garnier T."/>
            <person name="Eiglmeier K."/>
            <person name="Camus J.-C."/>
            <person name="Medina N."/>
            <person name="Mansoor H."/>
            <person name="Pryor M."/>
            <person name="Duthoy S."/>
            <person name="Grondin S."/>
            <person name="Lacroix C."/>
            <person name="Monsempe C."/>
            <person name="Simon S."/>
            <person name="Harris B."/>
            <person name="Atkin R."/>
            <person name="Doggett J."/>
            <person name="Mayes R."/>
            <person name="Keating L."/>
            <person name="Wheeler P.R."/>
            <person name="Parkhill J."/>
            <person name="Barrell B.G."/>
            <person name="Cole S.T."/>
            <person name="Gordon S.V."/>
            <person name="Hewinson R.G."/>
        </authorList>
    </citation>
    <scope>NUCLEOTIDE SEQUENCE [LARGE SCALE GENOMIC DNA]</scope>
    <source>
        <strain>ATCC BAA-935 / AF2122/97</strain>
    </source>
</reference>
<reference key="3">
    <citation type="journal article" date="2017" name="Genome Announc.">
        <title>Updated reference genome sequence and annotation of Mycobacterium bovis AF2122/97.</title>
        <authorList>
            <person name="Malone K.M."/>
            <person name="Farrell D."/>
            <person name="Stuber T.P."/>
            <person name="Schubert O.T."/>
            <person name="Aebersold R."/>
            <person name="Robbe-Austerman S."/>
            <person name="Gordon S.V."/>
        </authorList>
    </citation>
    <scope>NUCLEOTIDE SEQUENCE [LARGE SCALE GENOMIC DNA]</scope>
    <scope>GENOME REANNOTATION</scope>
    <source>
        <strain>ATCC BAA-935 / AF2122/97</strain>
    </source>
</reference>
<feature type="initiator methionine" description="Removed" evidence="1">
    <location>
        <position position="1"/>
    </location>
</feature>
<feature type="chain" id="PRO_0000130159" description="Small ribosomal subunit protein uS3">
    <location>
        <begin position="2"/>
        <end position="274"/>
    </location>
</feature>
<feature type="domain" description="KH type-2" evidence="2">
    <location>
        <begin position="38"/>
        <end position="106"/>
    </location>
</feature>
<feature type="region of interest" description="Disordered" evidence="3">
    <location>
        <begin position="215"/>
        <end position="274"/>
    </location>
</feature>
<feature type="compositionally biased region" description="Low complexity" evidence="3">
    <location>
        <begin position="238"/>
        <end position="266"/>
    </location>
</feature>
<feature type="sequence conflict" description="In Ref. 1; CAA73678." evidence="4" ref="1">
    <original>S</original>
    <variation>N</variation>
    <location>
        <position position="163"/>
    </location>
</feature>
<feature type="sequence conflict" description="In Ref. 1; CAA73678." evidence="4" ref="1">
    <original>A</original>
    <variation>P</variation>
    <location>
        <position position="253"/>
    </location>
</feature>
<organism>
    <name type="scientific">Mycobacterium bovis (strain ATCC BAA-935 / AF2122/97)</name>
    <dbReference type="NCBI Taxonomy" id="233413"/>
    <lineage>
        <taxon>Bacteria</taxon>
        <taxon>Bacillati</taxon>
        <taxon>Actinomycetota</taxon>
        <taxon>Actinomycetes</taxon>
        <taxon>Mycobacteriales</taxon>
        <taxon>Mycobacteriaceae</taxon>
        <taxon>Mycobacterium</taxon>
        <taxon>Mycobacterium tuberculosis complex</taxon>
    </lineage>
</organism>
<dbReference type="EMBL" id="Y13228">
    <property type="protein sequence ID" value="CAA73678.1"/>
    <property type="molecule type" value="Genomic_DNA"/>
</dbReference>
<dbReference type="EMBL" id="LT708304">
    <property type="protein sequence ID" value="SIT99326.1"/>
    <property type="molecule type" value="Genomic_DNA"/>
</dbReference>
<dbReference type="RefSeq" id="NP_854385.1">
    <property type="nucleotide sequence ID" value="NC_002945.3"/>
</dbReference>
<dbReference type="RefSeq" id="WP_003403590.1">
    <property type="nucleotide sequence ID" value="NC_002945.4"/>
</dbReference>
<dbReference type="SMR" id="P0A5X7"/>
<dbReference type="GeneID" id="45424672"/>
<dbReference type="KEGG" id="mbo:BQ2027_MB0727"/>
<dbReference type="PATRIC" id="fig|233413.5.peg.793"/>
<dbReference type="Proteomes" id="UP000001419">
    <property type="component" value="Chromosome"/>
</dbReference>
<dbReference type="GO" id="GO:0022627">
    <property type="term" value="C:cytosolic small ribosomal subunit"/>
    <property type="evidence" value="ECO:0007669"/>
    <property type="project" value="TreeGrafter"/>
</dbReference>
<dbReference type="GO" id="GO:0003729">
    <property type="term" value="F:mRNA binding"/>
    <property type="evidence" value="ECO:0007669"/>
    <property type="project" value="UniProtKB-UniRule"/>
</dbReference>
<dbReference type="GO" id="GO:0019843">
    <property type="term" value="F:rRNA binding"/>
    <property type="evidence" value="ECO:0007669"/>
    <property type="project" value="UniProtKB-UniRule"/>
</dbReference>
<dbReference type="GO" id="GO:0003735">
    <property type="term" value="F:structural constituent of ribosome"/>
    <property type="evidence" value="ECO:0007669"/>
    <property type="project" value="InterPro"/>
</dbReference>
<dbReference type="GO" id="GO:0006412">
    <property type="term" value="P:translation"/>
    <property type="evidence" value="ECO:0007669"/>
    <property type="project" value="UniProtKB-UniRule"/>
</dbReference>
<dbReference type="CDD" id="cd02412">
    <property type="entry name" value="KH-II_30S_S3"/>
    <property type="match status" value="1"/>
</dbReference>
<dbReference type="FunFam" id="3.30.1140.32:FF:000002">
    <property type="entry name" value="30S ribosomal protein S3"/>
    <property type="match status" value="1"/>
</dbReference>
<dbReference type="FunFam" id="3.30.300.20:FF:000001">
    <property type="entry name" value="30S ribosomal protein S3"/>
    <property type="match status" value="1"/>
</dbReference>
<dbReference type="Gene3D" id="3.30.300.20">
    <property type="match status" value="1"/>
</dbReference>
<dbReference type="Gene3D" id="3.30.1140.32">
    <property type="entry name" value="Ribosomal protein S3, C-terminal domain"/>
    <property type="match status" value="1"/>
</dbReference>
<dbReference type="HAMAP" id="MF_01309_B">
    <property type="entry name" value="Ribosomal_uS3_B"/>
    <property type="match status" value="1"/>
</dbReference>
<dbReference type="InterPro" id="IPR004087">
    <property type="entry name" value="KH_dom"/>
</dbReference>
<dbReference type="InterPro" id="IPR015946">
    <property type="entry name" value="KH_dom-like_a/b"/>
</dbReference>
<dbReference type="InterPro" id="IPR004044">
    <property type="entry name" value="KH_dom_type_2"/>
</dbReference>
<dbReference type="InterPro" id="IPR009019">
    <property type="entry name" value="KH_sf_prok-type"/>
</dbReference>
<dbReference type="InterPro" id="IPR036419">
    <property type="entry name" value="Ribosomal_S3_C_sf"/>
</dbReference>
<dbReference type="InterPro" id="IPR005704">
    <property type="entry name" value="Ribosomal_uS3_bac-typ"/>
</dbReference>
<dbReference type="InterPro" id="IPR001351">
    <property type="entry name" value="Ribosomal_uS3_C"/>
</dbReference>
<dbReference type="InterPro" id="IPR018280">
    <property type="entry name" value="Ribosomal_uS3_CS"/>
</dbReference>
<dbReference type="NCBIfam" id="TIGR01009">
    <property type="entry name" value="rpsC_bact"/>
    <property type="match status" value="1"/>
</dbReference>
<dbReference type="PANTHER" id="PTHR11760">
    <property type="entry name" value="30S/40S RIBOSOMAL PROTEIN S3"/>
    <property type="match status" value="1"/>
</dbReference>
<dbReference type="PANTHER" id="PTHR11760:SF19">
    <property type="entry name" value="SMALL RIBOSOMAL SUBUNIT PROTEIN US3C"/>
    <property type="match status" value="1"/>
</dbReference>
<dbReference type="Pfam" id="PF07650">
    <property type="entry name" value="KH_2"/>
    <property type="match status" value="1"/>
</dbReference>
<dbReference type="Pfam" id="PF00189">
    <property type="entry name" value="Ribosomal_S3_C"/>
    <property type="match status" value="1"/>
</dbReference>
<dbReference type="SMART" id="SM00322">
    <property type="entry name" value="KH"/>
    <property type="match status" value="1"/>
</dbReference>
<dbReference type="SUPFAM" id="SSF54814">
    <property type="entry name" value="Prokaryotic type KH domain (KH-domain type II)"/>
    <property type="match status" value="1"/>
</dbReference>
<dbReference type="SUPFAM" id="SSF54821">
    <property type="entry name" value="Ribosomal protein S3 C-terminal domain"/>
    <property type="match status" value="1"/>
</dbReference>
<dbReference type="PROSITE" id="PS50823">
    <property type="entry name" value="KH_TYPE_2"/>
    <property type="match status" value="1"/>
</dbReference>
<dbReference type="PROSITE" id="PS00548">
    <property type="entry name" value="RIBOSOMAL_S3"/>
    <property type="match status" value="1"/>
</dbReference>
<evidence type="ECO:0000250" key="1"/>
<evidence type="ECO:0000255" key="2">
    <source>
        <dbReference type="HAMAP-Rule" id="MF_01309"/>
    </source>
</evidence>
<evidence type="ECO:0000256" key="3">
    <source>
        <dbReference type="SAM" id="MobiDB-lite"/>
    </source>
</evidence>
<evidence type="ECO:0000305" key="4"/>
<sequence>MGQKINPHGFRLGITTDWKSRWYADKQYAEYVKEDVAIRRLLSSGLERAGIADVEIERTRDRVRVDIHTARPGIVIGRRGTEADRIRADLEKLTGKQVQLNILEVKNPESQAQLVAQGVAEQLSNRVAFRRAMRKAIQSAMRQPNVKGIRVQCSGRLGGAEMSRSEFYREGRVPLHTLRADIDYGLYEAKTTFGRIGVKVWIYKGDIVGGKRELAAAAPAGADRPRRERPSGTRPRRSGASGTTATGTDAGRAAGGEEAAPDAAAPVEAQSTES</sequence>
<name>RS3_MYCBO</name>
<keyword id="KW-1185">Reference proteome</keyword>
<keyword id="KW-0687">Ribonucleoprotein</keyword>
<keyword id="KW-0689">Ribosomal protein</keyword>
<keyword id="KW-0694">RNA-binding</keyword>
<keyword id="KW-0699">rRNA-binding</keyword>
<proteinExistence type="inferred from homology"/>
<accession>P0A5X7</accession>
<accession>A0A1R3XW56</accession>
<accession>O06048</accession>
<accession>P95055</accession>
<accession>X2BFS3</accession>
<gene>
    <name evidence="2" type="primary">rpsC</name>
    <name type="ordered locus">BQ2027_MB0727</name>
</gene>
<comment type="function">
    <text evidence="2">Binds the lower part of the 30S subunit head. Binds mRNA in the 70S ribosome, positioning it for translation.</text>
</comment>
<comment type="subunit">
    <text evidence="2">Part of the 30S ribosomal subunit. Forms a tight complex with proteins S10 and S14.</text>
</comment>
<comment type="similarity">
    <text evidence="2">Belongs to the universal ribosomal protein uS3 family.</text>
</comment>